<proteinExistence type="inferred from homology"/>
<comment type="function">
    <text evidence="1">One of the primary rRNA binding proteins, it binds directly to 16S rRNA central domain where it helps coordinate assembly of the platform of the 30S subunit.</text>
</comment>
<comment type="subunit">
    <text evidence="1">Part of the 30S ribosomal subunit.</text>
</comment>
<comment type="subcellular location">
    <subcellularLocation>
        <location>Plastid</location>
        <location>Chloroplast</location>
    </subcellularLocation>
</comment>
<comment type="similarity">
    <text evidence="2">Belongs to the universal ribosomal protein uS8 family.</text>
</comment>
<comment type="caution">
    <text evidence="2">A stretch of the chloroplast genome is duplicated within chromosome 8 resulting in the duplication of the gene. The expression of this duplicated gene has not been demonstrated.</text>
</comment>
<geneLocation type="chloroplast"/>
<name>RR8_ORYSJ</name>
<evidence type="ECO:0000250" key="1"/>
<evidence type="ECO:0000305" key="2"/>
<dbReference type="EMBL" id="X15901">
    <property type="protein sequence ID" value="CAA33931.1"/>
    <property type="molecule type" value="Genomic_DNA"/>
</dbReference>
<dbReference type="EMBL" id="AY522330">
    <property type="protein sequence ID" value="AAS46145.1"/>
    <property type="molecule type" value="Genomic_DNA"/>
</dbReference>
<dbReference type="EMBL" id="AP005161">
    <property type="protein sequence ID" value="BAD05518.1"/>
    <property type="molecule type" value="Genomic_DNA"/>
</dbReference>
<dbReference type="PIR" id="JQ0262">
    <property type="entry name" value="R3RZ8"/>
</dbReference>
<dbReference type="RefSeq" id="NP_039421.1">
    <property type="nucleotide sequence ID" value="NC_001320.1"/>
</dbReference>
<dbReference type="SMR" id="P0C494"/>
<dbReference type="FunCoup" id="P0C494">
    <property type="interactions" value="175"/>
</dbReference>
<dbReference type="STRING" id="39947.P0C494"/>
<dbReference type="PaxDb" id="39947-P0C494"/>
<dbReference type="EnsemblPlants" id="transcript-rps8">
    <property type="protein sequence ID" value="cds-CAA33931.1"/>
    <property type="gene ID" value="gene-rps8"/>
</dbReference>
<dbReference type="GeneID" id="3131446"/>
<dbReference type="Gramene" id="transcript-rps8">
    <property type="protein sequence ID" value="cds-CAA33931.1"/>
    <property type="gene ID" value="gene-rps8"/>
</dbReference>
<dbReference type="KEGG" id="dosa:rps8"/>
<dbReference type="KEGG" id="osa:3131446"/>
<dbReference type="InParanoid" id="P0C494"/>
<dbReference type="OrthoDB" id="591253at2759"/>
<dbReference type="Proteomes" id="UP000000763">
    <property type="component" value="Chromosome 8"/>
</dbReference>
<dbReference type="Proteomes" id="UP000059680">
    <property type="component" value="Chloroplast"/>
</dbReference>
<dbReference type="GO" id="GO:0009507">
    <property type="term" value="C:chloroplast"/>
    <property type="evidence" value="ECO:0007669"/>
    <property type="project" value="UniProtKB-SubCell"/>
</dbReference>
<dbReference type="GO" id="GO:0009536">
    <property type="term" value="C:plastid"/>
    <property type="evidence" value="ECO:0000305"/>
    <property type="project" value="Gramene"/>
</dbReference>
<dbReference type="GO" id="GO:1990904">
    <property type="term" value="C:ribonucleoprotein complex"/>
    <property type="evidence" value="ECO:0007669"/>
    <property type="project" value="UniProtKB-KW"/>
</dbReference>
<dbReference type="GO" id="GO:0005840">
    <property type="term" value="C:ribosome"/>
    <property type="evidence" value="ECO:0007669"/>
    <property type="project" value="UniProtKB-KW"/>
</dbReference>
<dbReference type="GO" id="GO:0019843">
    <property type="term" value="F:rRNA binding"/>
    <property type="evidence" value="ECO:0007669"/>
    <property type="project" value="UniProtKB-UniRule"/>
</dbReference>
<dbReference type="GO" id="GO:0003735">
    <property type="term" value="F:structural constituent of ribosome"/>
    <property type="evidence" value="ECO:0000318"/>
    <property type="project" value="GO_Central"/>
</dbReference>
<dbReference type="GO" id="GO:0006412">
    <property type="term" value="P:translation"/>
    <property type="evidence" value="ECO:0007669"/>
    <property type="project" value="UniProtKB-UniRule"/>
</dbReference>
<dbReference type="FunFam" id="3.30.1490.10:FF:000001">
    <property type="entry name" value="30S ribosomal protein S8"/>
    <property type="match status" value="1"/>
</dbReference>
<dbReference type="FunFam" id="3.30.1370.30:FF:000004">
    <property type="entry name" value="30S ribosomal protein S8, chloroplastic"/>
    <property type="match status" value="1"/>
</dbReference>
<dbReference type="Gene3D" id="3.30.1370.30">
    <property type="match status" value="1"/>
</dbReference>
<dbReference type="Gene3D" id="3.30.1490.10">
    <property type="match status" value="1"/>
</dbReference>
<dbReference type="HAMAP" id="MF_01302_B">
    <property type="entry name" value="Ribosomal_uS8_B"/>
    <property type="match status" value="1"/>
</dbReference>
<dbReference type="InterPro" id="IPR000630">
    <property type="entry name" value="Ribosomal_uS8"/>
</dbReference>
<dbReference type="InterPro" id="IPR047863">
    <property type="entry name" value="Ribosomal_uS8_CS"/>
</dbReference>
<dbReference type="InterPro" id="IPR035987">
    <property type="entry name" value="Ribosomal_uS8_sf"/>
</dbReference>
<dbReference type="NCBIfam" id="NF001109">
    <property type="entry name" value="PRK00136.1"/>
    <property type="match status" value="1"/>
</dbReference>
<dbReference type="PANTHER" id="PTHR11758">
    <property type="entry name" value="40S RIBOSOMAL PROTEIN S15A"/>
    <property type="match status" value="1"/>
</dbReference>
<dbReference type="Pfam" id="PF00410">
    <property type="entry name" value="Ribosomal_S8"/>
    <property type="match status" value="1"/>
</dbReference>
<dbReference type="SUPFAM" id="SSF56047">
    <property type="entry name" value="Ribosomal protein S8"/>
    <property type="match status" value="1"/>
</dbReference>
<dbReference type="PROSITE" id="PS00053">
    <property type="entry name" value="RIBOSOMAL_S8"/>
    <property type="match status" value="1"/>
</dbReference>
<organism>
    <name type="scientific">Oryza sativa subsp. japonica</name>
    <name type="common">Rice</name>
    <dbReference type="NCBI Taxonomy" id="39947"/>
    <lineage>
        <taxon>Eukaryota</taxon>
        <taxon>Viridiplantae</taxon>
        <taxon>Streptophyta</taxon>
        <taxon>Embryophyta</taxon>
        <taxon>Tracheophyta</taxon>
        <taxon>Spermatophyta</taxon>
        <taxon>Magnoliopsida</taxon>
        <taxon>Liliopsida</taxon>
        <taxon>Poales</taxon>
        <taxon>Poaceae</taxon>
        <taxon>BOP clade</taxon>
        <taxon>Oryzoideae</taxon>
        <taxon>Oryzeae</taxon>
        <taxon>Oryzinae</taxon>
        <taxon>Oryza</taxon>
        <taxon>Oryza sativa</taxon>
    </lineage>
</organism>
<protein>
    <recommendedName>
        <fullName evidence="2">Small ribosomal subunit protein uS8c</fullName>
    </recommendedName>
    <alternativeName>
        <fullName>30S ribosomal protein S8, chloroplastic</fullName>
    </alternativeName>
</protein>
<reference key="1">
    <citation type="journal article" date="1989" name="Mol. Gen. Genet.">
        <title>The complete sequence of the rice (Oryza sativa) chloroplast genome: intermolecular recombination between distinct tRNA genes accounts for a major plastid DNA inversion during the evolution of the cereals.</title>
        <authorList>
            <person name="Hiratsuka J."/>
            <person name="Shimada H."/>
            <person name="Whittier R."/>
            <person name="Ishibashi T."/>
            <person name="Sakamoto M."/>
            <person name="Mori M."/>
            <person name="Kondo C."/>
            <person name="Honji Y."/>
            <person name="Sun C.-R."/>
            <person name="Meng B.-Y."/>
            <person name="Li Y.-Q."/>
            <person name="Kanno A."/>
            <person name="Nishizawa Y."/>
            <person name="Hirai A."/>
            <person name="Shinozaki K."/>
            <person name="Sugiura M."/>
        </authorList>
    </citation>
    <scope>NUCLEOTIDE SEQUENCE [LARGE SCALE GENOMIC DNA]</scope>
    <source>
        <strain>cv. Nipponbare</strain>
    </source>
</reference>
<reference key="2">
    <citation type="journal article" date="2004" name="Plant Physiol.">
        <title>A comparison of rice chloroplast genomes.</title>
        <authorList>
            <person name="Tang J."/>
            <person name="Xia H."/>
            <person name="Cao M."/>
            <person name="Zhang X."/>
            <person name="Zeng W."/>
            <person name="Hu S."/>
            <person name="Tong W."/>
            <person name="Wang J."/>
            <person name="Wang J."/>
            <person name="Yu J."/>
            <person name="Yang H."/>
            <person name="Zhu L."/>
        </authorList>
    </citation>
    <scope>NUCLEOTIDE SEQUENCE [LARGE SCALE GENOMIC DNA]</scope>
    <source>
        <strain>cv. Nipponbare</strain>
    </source>
</reference>
<reference key="3">
    <citation type="journal article" date="2005" name="Nature">
        <title>The map-based sequence of the rice genome.</title>
        <authorList>
            <consortium name="International rice genome sequencing project (IRGSP)"/>
        </authorList>
    </citation>
    <scope>NUCLEOTIDE SEQUENCE [LARGE SCALE GENOMIC DNA]</scope>
    <source>
        <strain>cv. Nipponbare</strain>
    </source>
</reference>
<sequence>MGKDTIADLLTSIRNADMNKKGTVRVVSTNITENIVKILLREGFIESVRKHQESNRYFLVSTLRHQKRKTRKGIYRTRTFLKRISRPGLRIYANYQGIPKVLGGMGIAILSTSRGIMTDREARLNRIGGEVLCYIW</sequence>
<gene>
    <name type="primary">rps8</name>
</gene>
<feature type="chain" id="PRO_0000290088" description="Small ribosomal subunit protein uS8c">
    <location>
        <begin position="1"/>
        <end position="136"/>
    </location>
</feature>
<keyword id="KW-0150">Chloroplast</keyword>
<keyword id="KW-0934">Plastid</keyword>
<keyword id="KW-1185">Reference proteome</keyword>
<keyword id="KW-0687">Ribonucleoprotein</keyword>
<keyword id="KW-0689">Ribosomal protein</keyword>
<keyword id="KW-0694">RNA-binding</keyword>
<keyword id="KW-0699">rRNA-binding</keyword>
<accession>P0C494</accession>
<accession>P12148</accession>
<accession>Q6QY50</accession>
<accession>Q6Z508</accession>